<feature type="chain" id="PRO_1000094124" description="Ribonuclease 3">
    <location>
        <begin position="1"/>
        <end position="226"/>
    </location>
</feature>
<feature type="domain" description="RNase III" evidence="1">
    <location>
        <begin position="6"/>
        <end position="128"/>
    </location>
</feature>
<feature type="domain" description="DRBM" evidence="1">
    <location>
        <begin position="155"/>
        <end position="225"/>
    </location>
</feature>
<feature type="active site" evidence="1">
    <location>
        <position position="45"/>
    </location>
</feature>
<feature type="active site" evidence="1">
    <location>
        <position position="117"/>
    </location>
</feature>
<feature type="binding site" evidence="1">
    <location>
        <position position="41"/>
    </location>
    <ligand>
        <name>Mg(2+)</name>
        <dbReference type="ChEBI" id="CHEBI:18420"/>
    </ligand>
</feature>
<feature type="binding site" evidence="1">
    <location>
        <position position="114"/>
    </location>
    <ligand>
        <name>Mg(2+)</name>
        <dbReference type="ChEBI" id="CHEBI:18420"/>
    </ligand>
</feature>
<feature type="binding site" evidence="1">
    <location>
        <position position="117"/>
    </location>
    <ligand>
        <name>Mg(2+)</name>
        <dbReference type="ChEBI" id="CHEBI:18420"/>
    </ligand>
</feature>
<comment type="function">
    <text evidence="1">Digests double-stranded RNA. Involved in the processing of primary rRNA transcript to yield the immediate precursors to the large and small rRNAs (23S and 16S). Processes some mRNAs, and tRNAs when they are encoded in the rRNA operon. Processes pre-crRNA and tracrRNA of type II CRISPR loci if present in the organism.</text>
</comment>
<comment type="catalytic activity">
    <reaction evidence="1">
        <text>Endonucleolytic cleavage to 5'-phosphomonoester.</text>
        <dbReference type="EC" id="3.1.26.3"/>
    </reaction>
</comment>
<comment type="cofactor">
    <cofactor evidence="1">
        <name>Mg(2+)</name>
        <dbReference type="ChEBI" id="CHEBI:18420"/>
    </cofactor>
</comment>
<comment type="subunit">
    <text evidence="1">Homodimer.</text>
</comment>
<comment type="subcellular location">
    <subcellularLocation>
        <location evidence="1">Cytoplasm</location>
    </subcellularLocation>
</comment>
<comment type="similarity">
    <text evidence="1">Belongs to the ribonuclease III family.</text>
</comment>
<accession>B4F047</accession>
<name>RNC_PROMH</name>
<sequence>MNTLLVNQLQKKLGYTFKQNELLLQALTHRSASSKHNERLEFLGDSILSYVIANALYHRFPRVDEGDMSRMRATLVRGNTLAELAREFELGECLRLGPGELKSGGFRRESILADTVEALIGAIFLDSDIQNIENIILKWYENRLAEISPGDKQKDPKTRLQEYLQGRHLPLPSYVVVQVRGEAHDQEFTIHCQISGIDQPVKGMGTSRRKAEQAAAEQALIQLELE</sequence>
<proteinExistence type="inferred from homology"/>
<gene>
    <name evidence="1" type="primary">rnc</name>
    <name type="ordered locus">PMI1888</name>
</gene>
<evidence type="ECO:0000255" key="1">
    <source>
        <dbReference type="HAMAP-Rule" id="MF_00104"/>
    </source>
</evidence>
<reference key="1">
    <citation type="journal article" date="2008" name="J. Bacteriol.">
        <title>Complete genome sequence of uropathogenic Proteus mirabilis, a master of both adherence and motility.</title>
        <authorList>
            <person name="Pearson M.M."/>
            <person name="Sebaihia M."/>
            <person name="Churcher C."/>
            <person name="Quail M.A."/>
            <person name="Seshasayee A.S."/>
            <person name="Luscombe N.M."/>
            <person name="Abdellah Z."/>
            <person name="Arrosmith C."/>
            <person name="Atkin B."/>
            <person name="Chillingworth T."/>
            <person name="Hauser H."/>
            <person name="Jagels K."/>
            <person name="Moule S."/>
            <person name="Mungall K."/>
            <person name="Norbertczak H."/>
            <person name="Rabbinowitsch E."/>
            <person name="Walker D."/>
            <person name="Whithead S."/>
            <person name="Thomson N.R."/>
            <person name="Rather P.N."/>
            <person name="Parkhill J."/>
            <person name="Mobley H.L.T."/>
        </authorList>
    </citation>
    <scope>NUCLEOTIDE SEQUENCE [LARGE SCALE GENOMIC DNA]</scope>
    <source>
        <strain>HI4320</strain>
    </source>
</reference>
<keyword id="KW-0963">Cytoplasm</keyword>
<keyword id="KW-0255">Endonuclease</keyword>
<keyword id="KW-0378">Hydrolase</keyword>
<keyword id="KW-0460">Magnesium</keyword>
<keyword id="KW-0479">Metal-binding</keyword>
<keyword id="KW-0507">mRNA processing</keyword>
<keyword id="KW-0540">Nuclease</keyword>
<keyword id="KW-1185">Reference proteome</keyword>
<keyword id="KW-0694">RNA-binding</keyword>
<keyword id="KW-0698">rRNA processing</keyword>
<keyword id="KW-0699">rRNA-binding</keyword>
<keyword id="KW-0819">tRNA processing</keyword>
<protein>
    <recommendedName>
        <fullName evidence="1">Ribonuclease 3</fullName>
        <ecNumber evidence="1">3.1.26.3</ecNumber>
    </recommendedName>
    <alternativeName>
        <fullName evidence="1">Ribonuclease III</fullName>
        <shortName evidence="1">RNase III</shortName>
    </alternativeName>
</protein>
<organism>
    <name type="scientific">Proteus mirabilis (strain HI4320)</name>
    <dbReference type="NCBI Taxonomy" id="529507"/>
    <lineage>
        <taxon>Bacteria</taxon>
        <taxon>Pseudomonadati</taxon>
        <taxon>Pseudomonadota</taxon>
        <taxon>Gammaproteobacteria</taxon>
        <taxon>Enterobacterales</taxon>
        <taxon>Morganellaceae</taxon>
        <taxon>Proteus</taxon>
    </lineage>
</organism>
<dbReference type="EC" id="3.1.26.3" evidence="1"/>
<dbReference type="EMBL" id="AM942759">
    <property type="protein sequence ID" value="CAR43912.1"/>
    <property type="molecule type" value="Genomic_DNA"/>
</dbReference>
<dbReference type="RefSeq" id="WP_004248457.1">
    <property type="nucleotide sequence ID" value="NC_010554.1"/>
</dbReference>
<dbReference type="SMR" id="B4F047"/>
<dbReference type="EnsemblBacteria" id="CAR43912">
    <property type="protein sequence ID" value="CAR43912"/>
    <property type="gene ID" value="PMI1888"/>
</dbReference>
<dbReference type="GeneID" id="6803633"/>
<dbReference type="KEGG" id="pmr:PMI1888"/>
<dbReference type="eggNOG" id="COG0571">
    <property type="taxonomic scope" value="Bacteria"/>
</dbReference>
<dbReference type="HOGENOM" id="CLU_000907_1_1_6"/>
<dbReference type="Proteomes" id="UP000008319">
    <property type="component" value="Chromosome"/>
</dbReference>
<dbReference type="GO" id="GO:0005737">
    <property type="term" value="C:cytoplasm"/>
    <property type="evidence" value="ECO:0007669"/>
    <property type="project" value="UniProtKB-SubCell"/>
</dbReference>
<dbReference type="GO" id="GO:0003725">
    <property type="term" value="F:double-stranded RNA binding"/>
    <property type="evidence" value="ECO:0007669"/>
    <property type="project" value="TreeGrafter"/>
</dbReference>
<dbReference type="GO" id="GO:0046872">
    <property type="term" value="F:metal ion binding"/>
    <property type="evidence" value="ECO:0007669"/>
    <property type="project" value="UniProtKB-KW"/>
</dbReference>
<dbReference type="GO" id="GO:0004525">
    <property type="term" value="F:ribonuclease III activity"/>
    <property type="evidence" value="ECO:0007669"/>
    <property type="project" value="UniProtKB-UniRule"/>
</dbReference>
<dbReference type="GO" id="GO:0019843">
    <property type="term" value="F:rRNA binding"/>
    <property type="evidence" value="ECO:0007669"/>
    <property type="project" value="UniProtKB-KW"/>
</dbReference>
<dbReference type="GO" id="GO:0006397">
    <property type="term" value="P:mRNA processing"/>
    <property type="evidence" value="ECO:0007669"/>
    <property type="project" value="UniProtKB-UniRule"/>
</dbReference>
<dbReference type="GO" id="GO:0010468">
    <property type="term" value="P:regulation of gene expression"/>
    <property type="evidence" value="ECO:0007669"/>
    <property type="project" value="TreeGrafter"/>
</dbReference>
<dbReference type="GO" id="GO:0006364">
    <property type="term" value="P:rRNA processing"/>
    <property type="evidence" value="ECO:0007669"/>
    <property type="project" value="UniProtKB-UniRule"/>
</dbReference>
<dbReference type="GO" id="GO:0008033">
    <property type="term" value="P:tRNA processing"/>
    <property type="evidence" value="ECO:0007669"/>
    <property type="project" value="UniProtKB-KW"/>
</dbReference>
<dbReference type="CDD" id="cd10845">
    <property type="entry name" value="DSRM_RNAse_III_family"/>
    <property type="match status" value="1"/>
</dbReference>
<dbReference type="CDD" id="cd00593">
    <property type="entry name" value="RIBOc"/>
    <property type="match status" value="1"/>
</dbReference>
<dbReference type="FunFam" id="1.10.1520.10:FF:000001">
    <property type="entry name" value="Ribonuclease 3"/>
    <property type="match status" value="1"/>
</dbReference>
<dbReference type="FunFam" id="3.30.160.20:FF:000003">
    <property type="entry name" value="Ribonuclease 3"/>
    <property type="match status" value="1"/>
</dbReference>
<dbReference type="Gene3D" id="3.30.160.20">
    <property type="match status" value="1"/>
</dbReference>
<dbReference type="Gene3D" id="1.10.1520.10">
    <property type="entry name" value="Ribonuclease III domain"/>
    <property type="match status" value="1"/>
</dbReference>
<dbReference type="HAMAP" id="MF_00104">
    <property type="entry name" value="RNase_III"/>
    <property type="match status" value="1"/>
</dbReference>
<dbReference type="InterPro" id="IPR014720">
    <property type="entry name" value="dsRBD_dom"/>
</dbReference>
<dbReference type="InterPro" id="IPR011907">
    <property type="entry name" value="RNase_III"/>
</dbReference>
<dbReference type="InterPro" id="IPR000999">
    <property type="entry name" value="RNase_III_dom"/>
</dbReference>
<dbReference type="InterPro" id="IPR036389">
    <property type="entry name" value="RNase_III_sf"/>
</dbReference>
<dbReference type="NCBIfam" id="TIGR02191">
    <property type="entry name" value="RNaseIII"/>
    <property type="match status" value="1"/>
</dbReference>
<dbReference type="PANTHER" id="PTHR11207:SF0">
    <property type="entry name" value="RIBONUCLEASE 3"/>
    <property type="match status" value="1"/>
</dbReference>
<dbReference type="PANTHER" id="PTHR11207">
    <property type="entry name" value="RIBONUCLEASE III"/>
    <property type="match status" value="1"/>
</dbReference>
<dbReference type="Pfam" id="PF00035">
    <property type="entry name" value="dsrm"/>
    <property type="match status" value="1"/>
</dbReference>
<dbReference type="Pfam" id="PF14622">
    <property type="entry name" value="Ribonucleas_3_3"/>
    <property type="match status" value="1"/>
</dbReference>
<dbReference type="SMART" id="SM00358">
    <property type="entry name" value="DSRM"/>
    <property type="match status" value="1"/>
</dbReference>
<dbReference type="SMART" id="SM00535">
    <property type="entry name" value="RIBOc"/>
    <property type="match status" value="1"/>
</dbReference>
<dbReference type="SUPFAM" id="SSF54768">
    <property type="entry name" value="dsRNA-binding domain-like"/>
    <property type="match status" value="1"/>
</dbReference>
<dbReference type="SUPFAM" id="SSF69065">
    <property type="entry name" value="RNase III domain-like"/>
    <property type="match status" value="1"/>
</dbReference>
<dbReference type="PROSITE" id="PS50137">
    <property type="entry name" value="DS_RBD"/>
    <property type="match status" value="1"/>
</dbReference>
<dbReference type="PROSITE" id="PS00517">
    <property type="entry name" value="RNASE_3_1"/>
    <property type="match status" value="1"/>
</dbReference>
<dbReference type="PROSITE" id="PS50142">
    <property type="entry name" value="RNASE_3_2"/>
    <property type="match status" value="1"/>
</dbReference>